<accession>O00936</accession>
<accession>O00935</accession>
<accession>Q8WRF8</accession>
<accession>Q8WRF9</accession>
<accession>Q9U618</accession>
<organism evidence="8">
    <name type="scientific">Toxoplasma gondii</name>
    <dbReference type="NCBI Taxonomy" id="5811"/>
    <lineage>
        <taxon>Eukaryota</taxon>
        <taxon>Sar</taxon>
        <taxon>Alveolata</taxon>
        <taxon>Apicomplexa</taxon>
        <taxon>Conoidasida</taxon>
        <taxon>Coccidia</taxon>
        <taxon>Eucoccidiorida</taxon>
        <taxon>Eimeriorina</taxon>
        <taxon>Sarcocystidae</taxon>
        <taxon>Toxoplasma</taxon>
    </lineage>
</organism>
<feature type="chain" id="PRO_0000123378" description="Myosin-B/C">
    <location>
        <begin position="1"/>
        <end position="1171"/>
    </location>
</feature>
<feature type="domain" description="Myosin motor" evidence="3">
    <location>
        <begin position="105"/>
        <end position="780"/>
    </location>
</feature>
<feature type="region of interest" description="Actin-binding" evidence="2">
    <location>
        <begin position="671"/>
        <end position="681"/>
    </location>
</feature>
<feature type="region of interest" description="Tail">
    <location>
        <begin position="810"/>
        <end position="1171"/>
    </location>
</feature>
<feature type="binding site" evidence="1">
    <location>
        <begin position="199"/>
        <end position="206"/>
    </location>
    <ligand>
        <name>ATP</name>
        <dbReference type="ChEBI" id="CHEBI:30616"/>
    </ligand>
</feature>
<feature type="splice variant" id="VSP_050203" description="In isoform Myosin C." evidence="5 6">
    <original>IVRVMNSKVPPYMQKDVSYLI</original>
    <variation>NAPTQEFVIFSLTWKHNQKHS</variation>
    <location>
        <begin position="1054"/>
        <end position="1074"/>
    </location>
</feature>
<feature type="splice variant" id="VSP_050204" description="In isoform Myosin C." evidence="5 6">
    <location>
        <begin position="1075"/>
        <end position="1171"/>
    </location>
</feature>
<feature type="sequence conflict" description="In Ref. 1; AAL30895/AAL30896." evidence="7" ref="1">
    <original>A</original>
    <variation>G</variation>
    <location>
        <position position="791"/>
    </location>
</feature>
<evidence type="ECO:0000250" key="1"/>
<evidence type="ECO:0000255" key="2"/>
<evidence type="ECO:0000255" key="3">
    <source>
        <dbReference type="PROSITE-ProRule" id="PRU00782"/>
    </source>
</evidence>
<evidence type="ECO:0000269" key="4">
    <source>
    </source>
</evidence>
<evidence type="ECO:0000303" key="5">
    <source>
    </source>
</evidence>
<evidence type="ECO:0000303" key="6">
    <source>
    </source>
</evidence>
<evidence type="ECO:0000305" key="7"/>
<evidence type="ECO:0000312" key="8">
    <source>
        <dbReference type="EMBL" id="AAC47726.3"/>
    </source>
</evidence>
<reference key="1">
    <citation type="journal article" date="2001" name="J. Cell Biol.">
        <title>Toxoplasma gondii myosins B/C: one gene, two tails, two localizations, and a role in parasite division.</title>
        <authorList>
            <person name="Delbac F."/>
            <person name="Sanger A."/>
            <person name="Neuhaus E.M."/>
            <person name="Stratmann R."/>
            <person name="Ajioka J.W."/>
            <person name="Toursel C."/>
            <person name="Herm-Gotz A."/>
            <person name="Tomavo S."/>
            <person name="Soldati T."/>
            <person name="Soldati D."/>
        </authorList>
    </citation>
    <scope>NUCLEOTIDE SEQUENCE [MRNA] (ISOFORMS MYOSIN B AND MYOSIN C)</scope>
    <scope>SUBCELLULAR LOCATION</scope>
    <scope>DEVELOPMENTAL STAGE</scope>
</reference>
<reference evidence="7" key="2">
    <citation type="journal article" date="1997" name="J. Mol. Biol.">
        <title>A novel class of unconventional myosins from Toxoplasma gondii.</title>
        <authorList>
            <person name="Heintzelman M.B."/>
            <person name="Schwartzman J.D."/>
        </authorList>
    </citation>
    <scope>NUCLEOTIDE SEQUENCE [MRNA] OF 71-1171 (ISOFORMS MYOSIN B AND MYOSIN C)</scope>
</reference>
<reference evidence="7" key="3">
    <citation type="submission" date="2000-02" db="EMBL/GenBank/DDBJ databases">
        <authorList>
            <person name="Heintzelman M.B."/>
            <person name="Schwartzman J.D."/>
        </authorList>
    </citation>
    <scope>SEQUENCE REVISION TO 745-746</scope>
</reference>
<reference evidence="7" key="4">
    <citation type="journal article" date="2000" name="Mol. Biol. Cell">
        <title>A dibasic motif in the tail of a class XIV apicomplexan myosin is an essential determinant of plasma membrane localization.</title>
        <authorList>
            <person name="Hettmann C."/>
            <person name="Herm A."/>
            <person name="Geiter A."/>
            <person name="Frank B."/>
            <person name="Schwarz E."/>
            <person name="Soldati T."/>
            <person name="Soldati D."/>
        </authorList>
    </citation>
    <scope>NUCLEOTIDE SEQUENCE OF 71-139</scope>
    <source>
        <strain>RH</strain>
    </source>
</reference>
<reference evidence="7" key="5">
    <citation type="submission" date="2001-10" db="EMBL/GenBank/DDBJ databases">
        <authorList>
            <person name="Delbac F."/>
            <person name="Soldati D."/>
        </authorList>
    </citation>
    <scope>NUCLEOTIDE SEQUENCE OF 1-139</scope>
    <scope>SEQUENCE REVISION</scope>
</reference>
<name>MYOB_TOXGO</name>
<proteinExistence type="evidence at transcript level"/>
<sequence length="1171" mass="132672">MERKQTQMILGRRLAKDSPEVKHFQRKSSVVPFGRDGRAATNFTCWTADCPAVKADPTLVFAKCIVVGGSMDTQLELEQVDPPARGTFTVAPTDVFNANELIEPETVDDIGYLPHTNVACVLDVLKSRFLRSIIYTTAEPLLVAINPFKDLGNTTDAWISTYRNASKPEMLPPHVFKTARAALEDLEGYKKNQSIIVSGESGAGKTEATKQIMRFFASASSEVRTTIQDTIMAGNPILEAFGNAKTIRNNNSSRFGRFMMLDVSSHRGIQHGSISNFLLEKVRVVSQEANERSYHIFYQLLKGATSEMRAKYHLRSLKEYAYLNGKNGGCYDVPGIDDKADFEEVLQSLDAMQITGSKRHSVFSILSGLLLIGNVSIEGKDAQGVPDAAYISPQSEEILEEACQLLSVDDAALKKEILVKSTKVGPQVIEGVRTKDEAKTSVLSLSKNVYDKLFDWLVRQLNSLIDAPDGMPNFIGILDIFGFEVLEVNSLEQVLINITNEYLQKHFIDVVFDMETKLYQAEGVPTEALEYTDNLALVGALCGKNDSFFALLEDACLGIRSTDEGFCGTILRRLEPSGFFLESRRDKRLKFIIRHTIADIEYTCEGMLEKNKDFLRKEVMDVMKASTDPVTKALFEGIEIEAGKIGKGTLIASRFLKNLEEMIGIVAQTEAHFIRCLKPNEEKKPLGWNGSKVLNQLFSLSILEALQLRQVGYAYRRNFSEFCSHFRWLDLGLVNSDRDRKEVAQLLLEQSGIPESSWVIGKTMVFVKPDAAKELSILQREKLMCFQPLIAVLGPMWRKVLLRKKMARVIHFLTRLESNARRHLEPDSINISPEEREALLSGMERPRNPCVVVKKRVEPERAPPTKVLSLSRARLSLSKELPRNYAASNEALDVDDTMSVDTDAFLRLKMKRSPNENYLRQTALARLKERRPSHVCMEEAYHVWRSVELLFREPLSDKRLQNICTVIRNDMDQHYGFFWQVIINRTPNFGMAATHIHGSLHVVEQEGMYRDGRQFLFHLIMYKTRKPRKEEIRLHERAAEKTYGICRKRDFSGIVRVMNSKVPPYMQKDVSYLIGMLFQRYQYTRDWTNFATCIQSYLIGRYSEPFGGAWNVVAQEGAFFLSRLWTKHSRFLRVEIDFPALAEQASSEPCPGCPTPVLTVVCFEACAPDRP</sequence>
<keyword id="KW-0009">Actin-binding</keyword>
<keyword id="KW-0025">Alternative splicing</keyword>
<keyword id="KW-0067">ATP-binding</keyword>
<keyword id="KW-0963">Cytoplasm</keyword>
<keyword id="KW-0505">Motor protein</keyword>
<keyword id="KW-0518">Myosin</keyword>
<keyword id="KW-0547">Nucleotide-binding</keyword>
<dbReference type="EMBL" id="AF438183">
    <property type="protein sequence ID" value="AAL30895.1"/>
    <property type="molecule type" value="mRNA"/>
</dbReference>
<dbReference type="EMBL" id="AF438184">
    <property type="protein sequence ID" value="AAL30896.1"/>
    <property type="molecule type" value="mRNA"/>
</dbReference>
<dbReference type="EMBL" id="AF006627">
    <property type="protein sequence ID" value="AAC47725.3"/>
    <property type="molecule type" value="mRNA"/>
</dbReference>
<dbReference type="EMBL" id="AF006628">
    <property type="protein sequence ID" value="AAC47726.3"/>
    <property type="molecule type" value="mRNA"/>
</dbReference>
<dbReference type="EMBL" id="AF202585">
    <property type="protein sequence ID" value="AAF09586.2"/>
    <property type="molecule type" value="Genomic_DNA"/>
</dbReference>
<dbReference type="PIR" id="T29105">
    <property type="entry name" value="T29105"/>
</dbReference>
<dbReference type="PIR" id="T29106">
    <property type="entry name" value="T29106"/>
</dbReference>
<dbReference type="SMR" id="O00936"/>
<dbReference type="VEuPathDB" id="ToxoDB:TGARI_255190"/>
<dbReference type="VEuPathDB" id="ToxoDB:TGCAST_255190"/>
<dbReference type="VEuPathDB" id="ToxoDB:TGCOUG_255190"/>
<dbReference type="VEuPathDB" id="ToxoDB:TGDOM2_255190A"/>
<dbReference type="VEuPathDB" id="ToxoDB:TGDOM2_255190B"/>
<dbReference type="VEuPathDB" id="ToxoDB:TGFOU_255190"/>
<dbReference type="VEuPathDB" id="ToxoDB:TGGT1_255190"/>
<dbReference type="VEuPathDB" id="ToxoDB:TGMAS_255190A"/>
<dbReference type="VEuPathDB" id="ToxoDB:TGMAS_255190B"/>
<dbReference type="VEuPathDB" id="ToxoDB:TGME49_255190"/>
<dbReference type="VEuPathDB" id="ToxoDB:TGP89_255190"/>
<dbReference type="VEuPathDB" id="ToxoDB:TGPRC2_255190"/>
<dbReference type="VEuPathDB" id="ToxoDB:TGRH88_073760"/>
<dbReference type="VEuPathDB" id="ToxoDB:TGRUB_255190"/>
<dbReference type="VEuPathDB" id="ToxoDB:TGVAND_255190"/>
<dbReference type="VEuPathDB" id="ToxoDB:TGVEG_255190"/>
<dbReference type="GO" id="GO:0005737">
    <property type="term" value="C:cytoplasm"/>
    <property type="evidence" value="ECO:0007669"/>
    <property type="project" value="UniProtKB-SubCell"/>
</dbReference>
<dbReference type="GO" id="GO:0030286">
    <property type="term" value="C:dynein complex"/>
    <property type="evidence" value="ECO:0007669"/>
    <property type="project" value="InterPro"/>
</dbReference>
<dbReference type="GO" id="GO:0016020">
    <property type="term" value="C:membrane"/>
    <property type="evidence" value="ECO:0007669"/>
    <property type="project" value="TreeGrafter"/>
</dbReference>
<dbReference type="GO" id="GO:0016459">
    <property type="term" value="C:myosin complex"/>
    <property type="evidence" value="ECO:0007669"/>
    <property type="project" value="UniProtKB-KW"/>
</dbReference>
<dbReference type="GO" id="GO:0051015">
    <property type="term" value="F:actin filament binding"/>
    <property type="evidence" value="ECO:0007669"/>
    <property type="project" value="TreeGrafter"/>
</dbReference>
<dbReference type="GO" id="GO:0005524">
    <property type="term" value="F:ATP binding"/>
    <property type="evidence" value="ECO:0007669"/>
    <property type="project" value="UniProtKB-KW"/>
</dbReference>
<dbReference type="GO" id="GO:0000146">
    <property type="term" value="F:microfilament motor activity"/>
    <property type="evidence" value="ECO:0007669"/>
    <property type="project" value="TreeGrafter"/>
</dbReference>
<dbReference type="GO" id="GO:0007015">
    <property type="term" value="P:actin filament organization"/>
    <property type="evidence" value="ECO:0007669"/>
    <property type="project" value="TreeGrafter"/>
</dbReference>
<dbReference type="GO" id="GO:0007017">
    <property type="term" value="P:microtubule-based process"/>
    <property type="evidence" value="ECO:0007669"/>
    <property type="project" value="InterPro"/>
</dbReference>
<dbReference type="CDD" id="cd14876">
    <property type="entry name" value="MYSc_Myo14"/>
    <property type="match status" value="1"/>
</dbReference>
<dbReference type="FunFam" id="1.10.10.820:FF:000001">
    <property type="entry name" value="Myosin heavy chain"/>
    <property type="match status" value="1"/>
</dbReference>
<dbReference type="Gene3D" id="1.10.10.820">
    <property type="match status" value="1"/>
</dbReference>
<dbReference type="Gene3D" id="1.20.5.4820">
    <property type="match status" value="1"/>
</dbReference>
<dbReference type="Gene3D" id="1.20.58.530">
    <property type="match status" value="1"/>
</dbReference>
<dbReference type="Gene3D" id="3.40.850.10">
    <property type="entry name" value="Kinesin motor domain"/>
    <property type="match status" value="1"/>
</dbReference>
<dbReference type="Gene3D" id="1.20.120.720">
    <property type="entry name" value="Myosin VI head, motor domain, U50 subdomain"/>
    <property type="match status" value="1"/>
</dbReference>
<dbReference type="InterPro" id="IPR037177">
    <property type="entry name" value="DLC_sf"/>
</dbReference>
<dbReference type="InterPro" id="IPR036961">
    <property type="entry name" value="Kinesin_motor_dom_sf"/>
</dbReference>
<dbReference type="InterPro" id="IPR001609">
    <property type="entry name" value="Myosin_head_motor_dom-like"/>
</dbReference>
<dbReference type="InterPro" id="IPR036044">
    <property type="entry name" value="MYSc_Myo14"/>
</dbReference>
<dbReference type="InterPro" id="IPR027417">
    <property type="entry name" value="P-loop_NTPase"/>
</dbReference>
<dbReference type="PANTHER" id="PTHR13140">
    <property type="entry name" value="MYOSIN"/>
    <property type="match status" value="1"/>
</dbReference>
<dbReference type="PANTHER" id="PTHR13140:SF270">
    <property type="entry name" value="MYOSIN-12"/>
    <property type="match status" value="1"/>
</dbReference>
<dbReference type="Pfam" id="PF00063">
    <property type="entry name" value="Myosin_head"/>
    <property type="match status" value="1"/>
</dbReference>
<dbReference type="PRINTS" id="PR00193">
    <property type="entry name" value="MYOSINHEAVY"/>
</dbReference>
<dbReference type="SMART" id="SM00242">
    <property type="entry name" value="MYSc"/>
    <property type="match status" value="1"/>
</dbReference>
<dbReference type="SUPFAM" id="SSF54648">
    <property type="entry name" value="DLC"/>
    <property type="match status" value="1"/>
</dbReference>
<dbReference type="SUPFAM" id="SSF52540">
    <property type="entry name" value="P-loop containing nucleoside triphosphate hydrolases"/>
    <property type="match status" value="1"/>
</dbReference>
<dbReference type="PROSITE" id="PS51456">
    <property type="entry name" value="MYOSIN_MOTOR"/>
    <property type="match status" value="1"/>
</dbReference>
<comment type="function">
    <text>Myosins are actin-based motor molecules with ATPase activity. Unconventional myosins serve in intracellular movements. Their highly divergent tails are presumed to bind to membranous compartments, which would be moved relative to actin filaments. Plays a role in proper daughter cell budding and separation.</text>
</comment>
<comment type="subcellular location">
    <subcellularLocation>
        <location evidence="4">Cytoplasm</location>
    </subcellularLocation>
    <text>Isoform MyoB is cytoplasmic while isoform MyoC is concentrated at the anterior and posterior polar rings of the inner membrane complex.</text>
</comment>
<comment type="alternative products">
    <event type="alternative splicing"/>
    <isoform>
        <id>O00936-1</id>
        <name>Myosin B</name>
        <name>MyoB</name>
        <sequence type="displayed"/>
    </isoform>
    <isoform>
        <id>O00936-2</id>
        <name>Myosin C</name>
        <name>Myoc</name>
        <sequence type="described" ref="VSP_050203 VSP_050204"/>
    </isoform>
</comment>
<comment type="developmental stage">
    <text evidence="4">Both isoforms are expressed at higher levels in bradyzoites than in tachyzoites. Isoform MyoC is the predominant isoform in tachyzoites.</text>
</comment>
<comment type="similarity">
    <text evidence="7">Belongs to the TRAFAC class myosin-kinesin ATPase superfamily. Myosin family.</text>
</comment>
<protein>
    <recommendedName>
        <fullName>Myosin-B/C</fullName>
        <shortName>MyoB/C</shortName>
    </recommendedName>
    <alternativeName>
        <fullName>TgM-B</fullName>
    </alternativeName>
</protein>